<proteinExistence type="inferred from homology"/>
<feature type="chain" id="PRO_0000201366" description="UTP--glucose-1-phosphate uridylyltransferase">
    <location>
        <begin position="1"/>
        <end position="299"/>
    </location>
</feature>
<gene>
    <name type="primary">cap4C</name>
    <name type="ordered locus">SP_2092</name>
</gene>
<reference key="1">
    <citation type="journal article" date="2001" name="Science">
        <title>Complete genome sequence of a virulent isolate of Streptococcus pneumoniae.</title>
        <authorList>
            <person name="Tettelin H."/>
            <person name="Nelson K.E."/>
            <person name="Paulsen I.T."/>
            <person name="Eisen J.A."/>
            <person name="Read T.D."/>
            <person name="Peterson S.N."/>
            <person name="Heidelberg J.F."/>
            <person name="DeBoy R.T."/>
            <person name="Haft D.H."/>
            <person name="Dodson R.J."/>
            <person name="Durkin A.S."/>
            <person name="Gwinn M.L."/>
            <person name="Kolonay J.F."/>
            <person name="Nelson W.C."/>
            <person name="Peterson J.D."/>
            <person name="Umayam L.A."/>
            <person name="White O."/>
            <person name="Salzberg S.L."/>
            <person name="Lewis M.R."/>
            <person name="Radune D."/>
            <person name="Holtzapple E.K."/>
            <person name="Khouri H.M."/>
            <person name="Wolf A.M."/>
            <person name="Utterback T.R."/>
            <person name="Hansen C.L."/>
            <person name="McDonald L.A."/>
            <person name="Feldblyum T.V."/>
            <person name="Angiuoli S.V."/>
            <person name="Dickinson T."/>
            <person name="Hickey E.K."/>
            <person name="Holt I.E."/>
            <person name="Loftus B.J."/>
            <person name="Yang F."/>
            <person name="Smith H.O."/>
            <person name="Venter J.C."/>
            <person name="Dougherty B.A."/>
            <person name="Morrison D.A."/>
            <person name="Hollingshead S.K."/>
            <person name="Fraser C.M."/>
        </authorList>
    </citation>
    <scope>NUCLEOTIDE SEQUENCE [LARGE SCALE GENOMIC DNA]</scope>
    <source>
        <strain>ATCC BAA-334 / TIGR4</strain>
    </source>
</reference>
<sequence>MTSKVRKAVIPAAGLGTRFLPATKALAKEMLPIVDKPTIQFIVEEALKSGIEDILVVTGKSKRSIEDHFDSNFELEYNLKEKGKTDLLKLVDKTTDMRLHFIRQTHPRGLGDAVLQAKAFVGNEPFVVMLGDDLMDITDEKAVPLTKQLMDDYERTHASTIAVMPVPHDEVSAYGVIAPQGEGKDGLYSVETFVEKPAPEDAPSDLAIIGRYLLTPEIFEILEKQAPGAGNEIQLTDAIDTLNKTQRVFAREFKGARYDVGDKFGFMKTSIDYALKHPQVKDDLKNYLIQLGKELTEKE</sequence>
<protein>
    <recommendedName>
        <fullName>UTP--glucose-1-phosphate uridylyltransferase</fullName>
        <ecNumber>2.7.7.9</ecNumber>
    </recommendedName>
    <alternativeName>
        <fullName>Alpha-D-glucosyl-1-phosphate uridylyltransferase</fullName>
    </alternativeName>
    <alternativeName>
        <fullName>UDP-glucose pyrophosphorylase</fullName>
        <shortName>UDPGP</shortName>
    </alternativeName>
    <alternativeName>
        <fullName>Uridine diphosphoglucose pyrophosphorylase</fullName>
    </alternativeName>
</protein>
<dbReference type="EC" id="2.7.7.9"/>
<dbReference type="EMBL" id="AE005672">
    <property type="protein sequence ID" value="AAK76151.1"/>
    <property type="molecule type" value="Genomic_DNA"/>
</dbReference>
<dbReference type="PIR" id="F95244">
    <property type="entry name" value="F95244"/>
</dbReference>
<dbReference type="SMR" id="P58313"/>
<dbReference type="PaxDb" id="170187-SP_2092"/>
<dbReference type="EnsemblBacteria" id="AAK76151">
    <property type="protein sequence ID" value="AAK76151"/>
    <property type="gene ID" value="SP_2092"/>
</dbReference>
<dbReference type="KEGG" id="spn:SP_2092"/>
<dbReference type="eggNOG" id="COG1210">
    <property type="taxonomic scope" value="Bacteria"/>
</dbReference>
<dbReference type="PhylomeDB" id="P58313"/>
<dbReference type="BioCyc" id="SPNE170187:G1FZB-2177-MONOMER"/>
<dbReference type="UniPathway" id="UPA00215"/>
<dbReference type="UniPathway" id="UPA00934"/>
<dbReference type="Proteomes" id="UP000000585">
    <property type="component" value="Chromosome"/>
</dbReference>
<dbReference type="GO" id="GO:0003983">
    <property type="term" value="F:UTP:glucose-1-phosphate uridylyltransferase activity"/>
    <property type="evidence" value="ECO:0007669"/>
    <property type="project" value="UniProtKB-EC"/>
</dbReference>
<dbReference type="GO" id="GO:0045227">
    <property type="term" value="P:capsule polysaccharide biosynthetic process"/>
    <property type="evidence" value="ECO:0007669"/>
    <property type="project" value="UniProtKB-UniPathway"/>
</dbReference>
<dbReference type="GO" id="GO:0006011">
    <property type="term" value="P:UDP-alpha-D-glucose metabolic process"/>
    <property type="evidence" value="ECO:0007669"/>
    <property type="project" value="InterPro"/>
</dbReference>
<dbReference type="CDD" id="cd02541">
    <property type="entry name" value="UGPase_prokaryotic"/>
    <property type="match status" value="1"/>
</dbReference>
<dbReference type="Gene3D" id="3.90.550.10">
    <property type="entry name" value="Spore Coat Polysaccharide Biosynthesis Protein SpsA, Chain A"/>
    <property type="match status" value="1"/>
</dbReference>
<dbReference type="InterPro" id="IPR005771">
    <property type="entry name" value="GalU_uridylyltTrfase_bac/arc"/>
</dbReference>
<dbReference type="InterPro" id="IPR005835">
    <property type="entry name" value="NTP_transferase_dom"/>
</dbReference>
<dbReference type="InterPro" id="IPR029044">
    <property type="entry name" value="Nucleotide-diphossugar_trans"/>
</dbReference>
<dbReference type="NCBIfam" id="TIGR01099">
    <property type="entry name" value="galU"/>
    <property type="match status" value="1"/>
</dbReference>
<dbReference type="PANTHER" id="PTHR43197">
    <property type="entry name" value="UTP--GLUCOSE-1-PHOSPHATE URIDYLYLTRANSFERASE"/>
    <property type="match status" value="1"/>
</dbReference>
<dbReference type="PANTHER" id="PTHR43197:SF1">
    <property type="entry name" value="UTP--GLUCOSE-1-PHOSPHATE URIDYLYLTRANSFERASE"/>
    <property type="match status" value="1"/>
</dbReference>
<dbReference type="Pfam" id="PF00483">
    <property type="entry name" value="NTP_transferase"/>
    <property type="match status" value="1"/>
</dbReference>
<dbReference type="SUPFAM" id="SSF53448">
    <property type="entry name" value="Nucleotide-diphospho-sugar transferases"/>
    <property type="match status" value="1"/>
</dbReference>
<evidence type="ECO:0000305" key="1"/>
<organism>
    <name type="scientific">Streptococcus pneumoniae serotype 4 (strain ATCC BAA-334 / TIGR4)</name>
    <dbReference type="NCBI Taxonomy" id="170187"/>
    <lineage>
        <taxon>Bacteria</taxon>
        <taxon>Bacillati</taxon>
        <taxon>Bacillota</taxon>
        <taxon>Bacilli</taxon>
        <taxon>Lactobacillales</taxon>
        <taxon>Streptococcaceae</taxon>
        <taxon>Streptococcus</taxon>
    </lineage>
</organism>
<comment type="catalytic activity">
    <reaction>
        <text>alpha-D-glucose 1-phosphate + UTP + H(+) = UDP-alpha-D-glucose + diphosphate</text>
        <dbReference type="Rhea" id="RHEA:19889"/>
        <dbReference type="ChEBI" id="CHEBI:15378"/>
        <dbReference type="ChEBI" id="CHEBI:33019"/>
        <dbReference type="ChEBI" id="CHEBI:46398"/>
        <dbReference type="ChEBI" id="CHEBI:58601"/>
        <dbReference type="ChEBI" id="CHEBI:58885"/>
        <dbReference type="EC" id="2.7.7.9"/>
    </reaction>
</comment>
<comment type="pathway">
    <text>Carbohydrate metabolism; nucleotide-sugar metabolism.</text>
</comment>
<comment type="pathway">
    <text>Capsule biogenesis; capsule polysaccharide biosynthesis.</text>
</comment>
<comment type="similarity">
    <text evidence="1">Belongs to the UDPGP type 2 family.</text>
</comment>
<accession>P58313</accession>
<name>CAP4C_STRPN</name>
<keyword id="KW-0972">Capsule biogenesis/degradation</keyword>
<keyword id="KW-0270">Exopolysaccharide synthesis</keyword>
<keyword id="KW-0548">Nucleotidyltransferase</keyword>
<keyword id="KW-1185">Reference proteome</keyword>
<keyword id="KW-0808">Transferase</keyword>